<comment type="function">
    <text evidence="1">Catalyzes the formation of 4-diphosphocytidyl-2-C-methyl-D-erythritol from CTP and 2-C-methyl-D-erythritol 4-phosphate (MEP).</text>
</comment>
<comment type="catalytic activity">
    <reaction evidence="1">
        <text>2-C-methyl-D-erythritol 4-phosphate + CTP + H(+) = 4-CDP-2-C-methyl-D-erythritol + diphosphate</text>
        <dbReference type="Rhea" id="RHEA:13429"/>
        <dbReference type="ChEBI" id="CHEBI:15378"/>
        <dbReference type="ChEBI" id="CHEBI:33019"/>
        <dbReference type="ChEBI" id="CHEBI:37563"/>
        <dbReference type="ChEBI" id="CHEBI:57823"/>
        <dbReference type="ChEBI" id="CHEBI:58262"/>
        <dbReference type="EC" id="2.7.7.60"/>
    </reaction>
</comment>
<comment type="pathway">
    <text evidence="1">Isoprenoid biosynthesis; isopentenyl diphosphate biosynthesis via DXP pathway; isopentenyl diphosphate from 1-deoxy-D-xylulose 5-phosphate: step 2/6.</text>
</comment>
<comment type="similarity">
    <text evidence="1">Belongs to the IspD/TarI cytidylyltransferase family. IspD subfamily.</text>
</comment>
<evidence type="ECO:0000255" key="1">
    <source>
        <dbReference type="HAMAP-Rule" id="MF_00108"/>
    </source>
</evidence>
<keyword id="KW-0414">Isoprene biosynthesis</keyword>
<keyword id="KW-0548">Nucleotidyltransferase</keyword>
<keyword id="KW-0808">Transferase</keyword>
<protein>
    <recommendedName>
        <fullName evidence="1">2-C-methyl-D-erythritol 4-phosphate cytidylyltransferase</fullName>
        <ecNumber evidence="1">2.7.7.60</ecNumber>
    </recommendedName>
    <alternativeName>
        <fullName evidence="1">4-diphosphocytidyl-2C-methyl-D-erythritol synthase</fullName>
    </alternativeName>
    <alternativeName>
        <fullName evidence="1">MEP cytidylyltransferase</fullName>
        <shortName evidence="1">MCT</shortName>
    </alternativeName>
</protein>
<proteinExistence type="inferred from homology"/>
<name>ISPD_PROM9</name>
<accession>Q31C80</accession>
<sequence length="226" mass="25218">MHFLIPAAGSGSRMKAGKNKLLIDLEGESLIYWTLKSVFSASSTNWVGIIGQPKDKELLLNSAKNFAHKVHWINGGDTRQESVFNGLKALPKDAEKVLIHDGARCLINPELIDQCANQLDQNEAVILATKVTDTIKIVDNEGFIKETPDRNYLWAAQTPQGFLVDRLKKAHTMAIDKNWKVTDDASLFEMLNWKVKIIEGTYSNIKITSPIDLKIAKLFVKNSTPS</sequence>
<organism>
    <name type="scientific">Prochlorococcus marinus (strain MIT 9312)</name>
    <dbReference type="NCBI Taxonomy" id="74546"/>
    <lineage>
        <taxon>Bacteria</taxon>
        <taxon>Bacillati</taxon>
        <taxon>Cyanobacteriota</taxon>
        <taxon>Cyanophyceae</taxon>
        <taxon>Synechococcales</taxon>
        <taxon>Prochlorococcaceae</taxon>
        <taxon>Prochlorococcus</taxon>
    </lineage>
</organism>
<gene>
    <name evidence="1" type="primary">ispD</name>
    <name type="ordered locus">PMT9312_0454</name>
</gene>
<feature type="chain" id="PRO_0000237805" description="2-C-methyl-D-erythritol 4-phosphate cytidylyltransferase">
    <location>
        <begin position="1"/>
        <end position="226"/>
    </location>
</feature>
<feature type="site" description="Transition state stabilizer" evidence="1">
    <location>
        <position position="13"/>
    </location>
</feature>
<feature type="site" description="Transition state stabilizer" evidence="1">
    <location>
        <position position="20"/>
    </location>
</feature>
<feature type="site" description="Positions MEP for the nucleophilic attack" evidence="1">
    <location>
        <position position="150"/>
    </location>
</feature>
<feature type="site" description="Positions MEP for the nucleophilic attack" evidence="1">
    <location>
        <position position="206"/>
    </location>
</feature>
<reference key="1">
    <citation type="journal article" date="2006" name="Science">
        <title>Genomic islands and the ecology and evolution of Prochlorococcus.</title>
        <authorList>
            <person name="Coleman M.L."/>
            <person name="Sullivan M.B."/>
            <person name="Martiny A.C."/>
            <person name="Steglich C."/>
            <person name="Barry K."/>
            <person name="Delong E.F."/>
            <person name="Chisholm S.W."/>
        </authorList>
    </citation>
    <scope>NUCLEOTIDE SEQUENCE [LARGE SCALE GENOMIC DNA]</scope>
    <source>
        <strain>MIT 9312</strain>
    </source>
</reference>
<dbReference type="EC" id="2.7.7.60" evidence="1"/>
<dbReference type="EMBL" id="CP000111">
    <property type="protein sequence ID" value="ABB49515.1"/>
    <property type="molecule type" value="Genomic_DNA"/>
</dbReference>
<dbReference type="RefSeq" id="WP_011376014.1">
    <property type="nucleotide sequence ID" value="NC_007577.1"/>
</dbReference>
<dbReference type="SMR" id="Q31C80"/>
<dbReference type="STRING" id="74546.PMT9312_0454"/>
<dbReference type="KEGG" id="pmi:PMT9312_0454"/>
<dbReference type="eggNOG" id="COG1211">
    <property type="taxonomic scope" value="Bacteria"/>
</dbReference>
<dbReference type="HOGENOM" id="CLU_061281_1_0_3"/>
<dbReference type="OrthoDB" id="9806837at2"/>
<dbReference type="UniPathway" id="UPA00056">
    <property type="reaction ID" value="UER00093"/>
</dbReference>
<dbReference type="Proteomes" id="UP000002715">
    <property type="component" value="Chromosome"/>
</dbReference>
<dbReference type="GO" id="GO:0050518">
    <property type="term" value="F:2-C-methyl-D-erythritol 4-phosphate cytidylyltransferase activity"/>
    <property type="evidence" value="ECO:0007669"/>
    <property type="project" value="UniProtKB-UniRule"/>
</dbReference>
<dbReference type="GO" id="GO:0019288">
    <property type="term" value="P:isopentenyl diphosphate biosynthetic process, methylerythritol 4-phosphate pathway"/>
    <property type="evidence" value="ECO:0007669"/>
    <property type="project" value="UniProtKB-UniRule"/>
</dbReference>
<dbReference type="CDD" id="cd02516">
    <property type="entry name" value="CDP-ME_synthetase"/>
    <property type="match status" value="1"/>
</dbReference>
<dbReference type="FunFam" id="3.90.550.10:FF:000003">
    <property type="entry name" value="2-C-methyl-D-erythritol 4-phosphate cytidylyltransferase"/>
    <property type="match status" value="1"/>
</dbReference>
<dbReference type="Gene3D" id="3.90.550.10">
    <property type="entry name" value="Spore Coat Polysaccharide Biosynthesis Protein SpsA, Chain A"/>
    <property type="match status" value="1"/>
</dbReference>
<dbReference type="HAMAP" id="MF_00108">
    <property type="entry name" value="IspD"/>
    <property type="match status" value="1"/>
</dbReference>
<dbReference type="InterPro" id="IPR001228">
    <property type="entry name" value="IspD"/>
</dbReference>
<dbReference type="InterPro" id="IPR034683">
    <property type="entry name" value="IspD/TarI"/>
</dbReference>
<dbReference type="InterPro" id="IPR050088">
    <property type="entry name" value="IspD/TarI_cytidylyltransf_bact"/>
</dbReference>
<dbReference type="InterPro" id="IPR018294">
    <property type="entry name" value="ISPD_synthase_CS"/>
</dbReference>
<dbReference type="InterPro" id="IPR029044">
    <property type="entry name" value="Nucleotide-diphossugar_trans"/>
</dbReference>
<dbReference type="NCBIfam" id="TIGR00453">
    <property type="entry name" value="ispD"/>
    <property type="match status" value="1"/>
</dbReference>
<dbReference type="PANTHER" id="PTHR32125">
    <property type="entry name" value="2-C-METHYL-D-ERYTHRITOL 4-PHOSPHATE CYTIDYLYLTRANSFERASE, CHLOROPLASTIC"/>
    <property type="match status" value="1"/>
</dbReference>
<dbReference type="PANTHER" id="PTHR32125:SF4">
    <property type="entry name" value="2-C-METHYL-D-ERYTHRITOL 4-PHOSPHATE CYTIDYLYLTRANSFERASE, CHLOROPLASTIC"/>
    <property type="match status" value="1"/>
</dbReference>
<dbReference type="Pfam" id="PF01128">
    <property type="entry name" value="IspD"/>
    <property type="match status" value="1"/>
</dbReference>
<dbReference type="SUPFAM" id="SSF53448">
    <property type="entry name" value="Nucleotide-diphospho-sugar transferases"/>
    <property type="match status" value="1"/>
</dbReference>
<dbReference type="PROSITE" id="PS01295">
    <property type="entry name" value="ISPD"/>
    <property type="match status" value="1"/>
</dbReference>